<gene>
    <name evidence="1" type="primary">ispG</name>
    <name type="ordered locus">BPUM_2235</name>
</gene>
<name>ISPG_BACP2</name>
<proteinExistence type="inferred from homology"/>
<sequence>MSEVTHRTKTRPVKVGPLTIGGNNEVVIQSMATTKTHDVEATVAEIKRLEEAGCQIVRVACPDERAANAIADIKKQINIPLVVDIHFDYKLALKAIEAGADKIRINPGNIGRREKVEAVVKAAKEKGIPIRIGVNAGSLEKKILDKYGYPTADGMVESALHHIKILEDLDFHDIIVSMKASDVNLAIEAYEKAAKAFDYPLHLGITESGTLFAGTVKSAAGLGAILNMGIGNTLRISLSADPVEEVKVARELLKSFGLAANAATLISCPTCGRIEIDLISIANEVEEYISTIKAPIKVAVLGCAVNGPGEAREADIGIAGARGEGLLFRKGEIVRKVPEETMVEELKKEIDKIAEEHYAKMEAEKAKANA</sequence>
<evidence type="ECO:0000255" key="1">
    <source>
        <dbReference type="HAMAP-Rule" id="MF_00159"/>
    </source>
</evidence>
<dbReference type="EC" id="1.17.7.3" evidence="1"/>
<dbReference type="EMBL" id="CP000813">
    <property type="protein sequence ID" value="ABV62904.1"/>
    <property type="molecule type" value="Genomic_DNA"/>
</dbReference>
<dbReference type="RefSeq" id="WP_003217392.1">
    <property type="nucleotide sequence ID" value="NZ_VEIS01000005.1"/>
</dbReference>
<dbReference type="SMR" id="A8FF87"/>
<dbReference type="STRING" id="315750.BPUM_2235"/>
<dbReference type="GeneID" id="5621501"/>
<dbReference type="KEGG" id="bpu:BPUM_2235"/>
<dbReference type="eggNOG" id="COG0821">
    <property type="taxonomic scope" value="Bacteria"/>
</dbReference>
<dbReference type="HOGENOM" id="CLU_042258_0_0_9"/>
<dbReference type="OrthoDB" id="9803214at2"/>
<dbReference type="UniPathway" id="UPA00056">
    <property type="reaction ID" value="UER00096"/>
</dbReference>
<dbReference type="Proteomes" id="UP000001355">
    <property type="component" value="Chromosome"/>
</dbReference>
<dbReference type="GO" id="GO:0051539">
    <property type="term" value="F:4 iron, 4 sulfur cluster binding"/>
    <property type="evidence" value="ECO:0007669"/>
    <property type="project" value="UniProtKB-UniRule"/>
</dbReference>
<dbReference type="GO" id="GO:0046429">
    <property type="term" value="F:4-hydroxy-3-methylbut-2-en-1-yl diphosphate synthase activity (ferredoxin)"/>
    <property type="evidence" value="ECO:0007669"/>
    <property type="project" value="UniProtKB-UniRule"/>
</dbReference>
<dbReference type="GO" id="GO:0141197">
    <property type="term" value="F:4-hydroxy-3-methylbut-2-enyl-diphosphate synthase activity (flavodoxin)"/>
    <property type="evidence" value="ECO:0007669"/>
    <property type="project" value="UniProtKB-EC"/>
</dbReference>
<dbReference type="GO" id="GO:0005506">
    <property type="term" value="F:iron ion binding"/>
    <property type="evidence" value="ECO:0007669"/>
    <property type="project" value="InterPro"/>
</dbReference>
<dbReference type="GO" id="GO:0019288">
    <property type="term" value="P:isopentenyl diphosphate biosynthetic process, methylerythritol 4-phosphate pathway"/>
    <property type="evidence" value="ECO:0007669"/>
    <property type="project" value="UniProtKB-UniRule"/>
</dbReference>
<dbReference type="GO" id="GO:0016114">
    <property type="term" value="P:terpenoid biosynthetic process"/>
    <property type="evidence" value="ECO:0007669"/>
    <property type="project" value="InterPro"/>
</dbReference>
<dbReference type="FunFam" id="3.20.20.20:FF:000001">
    <property type="entry name" value="4-hydroxy-3-methylbut-2-en-1-yl diphosphate synthase (flavodoxin)"/>
    <property type="match status" value="1"/>
</dbReference>
<dbReference type="FunFam" id="3.30.413.10:FF:000005">
    <property type="entry name" value="4-hydroxy-3-methylbut-2-en-1-yl diphosphate synthase (flavodoxin)"/>
    <property type="match status" value="1"/>
</dbReference>
<dbReference type="Gene3D" id="3.20.20.20">
    <property type="entry name" value="Dihydropteroate synthase-like"/>
    <property type="match status" value="1"/>
</dbReference>
<dbReference type="Gene3D" id="3.30.413.10">
    <property type="entry name" value="Sulfite Reductase Hemoprotein, domain 1"/>
    <property type="match status" value="1"/>
</dbReference>
<dbReference type="HAMAP" id="MF_00159">
    <property type="entry name" value="IspG"/>
    <property type="match status" value="1"/>
</dbReference>
<dbReference type="InterPro" id="IPR011005">
    <property type="entry name" value="Dihydropteroate_synth-like_sf"/>
</dbReference>
<dbReference type="InterPro" id="IPR016425">
    <property type="entry name" value="IspG_bac"/>
</dbReference>
<dbReference type="InterPro" id="IPR004588">
    <property type="entry name" value="IspG_bac-typ"/>
</dbReference>
<dbReference type="InterPro" id="IPR045854">
    <property type="entry name" value="NO2/SO3_Rdtase_4Fe4S_sf"/>
</dbReference>
<dbReference type="NCBIfam" id="TIGR00612">
    <property type="entry name" value="ispG_gcpE"/>
    <property type="match status" value="1"/>
</dbReference>
<dbReference type="NCBIfam" id="NF001540">
    <property type="entry name" value="PRK00366.1"/>
    <property type="match status" value="1"/>
</dbReference>
<dbReference type="PANTHER" id="PTHR30454">
    <property type="entry name" value="4-HYDROXY-3-METHYLBUT-2-EN-1-YL DIPHOSPHATE SYNTHASE"/>
    <property type="match status" value="1"/>
</dbReference>
<dbReference type="PANTHER" id="PTHR30454:SF0">
    <property type="entry name" value="4-HYDROXY-3-METHYLBUT-2-EN-1-YL DIPHOSPHATE SYNTHASE (FERREDOXIN), CHLOROPLASTIC"/>
    <property type="match status" value="1"/>
</dbReference>
<dbReference type="Pfam" id="PF04551">
    <property type="entry name" value="GcpE"/>
    <property type="match status" value="1"/>
</dbReference>
<dbReference type="PIRSF" id="PIRSF004640">
    <property type="entry name" value="IspG"/>
    <property type="match status" value="1"/>
</dbReference>
<dbReference type="SUPFAM" id="SSF51717">
    <property type="entry name" value="Dihydropteroate synthetase-like"/>
    <property type="match status" value="1"/>
</dbReference>
<dbReference type="SUPFAM" id="SSF56014">
    <property type="entry name" value="Nitrite and sulphite reductase 4Fe-4S domain-like"/>
    <property type="match status" value="1"/>
</dbReference>
<accession>A8FF87</accession>
<protein>
    <recommendedName>
        <fullName evidence="1">4-hydroxy-3-methylbut-2-en-1-yl diphosphate synthase (flavodoxin)</fullName>
        <ecNumber evidence="1">1.17.7.3</ecNumber>
    </recommendedName>
    <alternativeName>
        <fullName evidence="1">1-hydroxy-2-methyl-2-(E)-butenyl 4-diphosphate synthase</fullName>
    </alternativeName>
</protein>
<organism>
    <name type="scientific">Bacillus pumilus (strain SAFR-032)</name>
    <dbReference type="NCBI Taxonomy" id="315750"/>
    <lineage>
        <taxon>Bacteria</taxon>
        <taxon>Bacillati</taxon>
        <taxon>Bacillota</taxon>
        <taxon>Bacilli</taxon>
        <taxon>Bacillales</taxon>
        <taxon>Bacillaceae</taxon>
        <taxon>Bacillus</taxon>
    </lineage>
</organism>
<keyword id="KW-0004">4Fe-4S</keyword>
<keyword id="KW-0408">Iron</keyword>
<keyword id="KW-0411">Iron-sulfur</keyword>
<keyword id="KW-0414">Isoprene biosynthesis</keyword>
<keyword id="KW-0479">Metal-binding</keyword>
<keyword id="KW-0560">Oxidoreductase</keyword>
<reference key="1">
    <citation type="journal article" date="2007" name="PLoS ONE">
        <title>Paradoxical DNA repair and peroxide resistance gene conservation in Bacillus pumilus SAFR-032.</title>
        <authorList>
            <person name="Gioia J."/>
            <person name="Yerrapragada S."/>
            <person name="Qin X."/>
            <person name="Jiang H."/>
            <person name="Igboeli O.C."/>
            <person name="Muzny D."/>
            <person name="Dugan-Rocha S."/>
            <person name="Ding Y."/>
            <person name="Hawes A."/>
            <person name="Liu W."/>
            <person name="Perez L."/>
            <person name="Kovar C."/>
            <person name="Dinh H."/>
            <person name="Lee S."/>
            <person name="Nazareth L."/>
            <person name="Blyth P."/>
            <person name="Holder M."/>
            <person name="Buhay C."/>
            <person name="Tirumalai M.R."/>
            <person name="Liu Y."/>
            <person name="Dasgupta I."/>
            <person name="Bokhetache L."/>
            <person name="Fujita M."/>
            <person name="Karouia F."/>
            <person name="Eswara Moorthy P."/>
            <person name="Siefert J."/>
            <person name="Uzman A."/>
            <person name="Buzumbo P."/>
            <person name="Verma A."/>
            <person name="Zwiya H."/>
            <person name="McWilliams B.D."/>
            <person name="Olowu A."/>
            <person name="Clinkenbeard K.D."/>
            <person name="Newcombe D."/>
            <person name="Golebiewski L."/>
            <person name="Petrosino J.F."/>
            <person name="Nicholson W.L."/>
            <person name="Fox G.E."/>
            <person name="Venkateswaran K."/>
            <person name="Highlander S.K."/>
            <person name="Weinstock G.M."/>
        </authorList>
    </citation>
    <scope>NUCLEOTIDE SEQUENCE [LARGE SCALE GENOMIC DNA]</scope>
    <source>
        <strain>SAFR-032</strain>
    </source>
</reference>
<feature type="chain" id="PRO_1000058192" description="4-hydroxy-3-methylbut-2-en-1-yl diphosphate synthase (flavodoxin)">
    <location>
        <begin position="1"/>
        <end position="370"/>
    </location>
</feature>
<feature type="binding site" evidence="1">
    <location>
        <position position="268"/>
    </location>
    <ligand>
        <name>[4Fe-4S] cluster</name>
        <dbReference type="ChEBI" id="CHEBI:49883"/>
    </ligand>
</feature>
<feature type="binding site" evidence="1">
    <location>
        <position position="271"/>
    </location>
    <ligand>
        <name>[4Fe-4S] cluster</name>
        <dbReference type="ChEBI" id="CHEBI:49883"/>
    </ligand>
</feature>
<feature type="binding site" evidence="1">
    <location>
        <position position="303"/>
    </location>
    <ligand>
        <name>[4Fe-4S] cluster</name>
        <dbReference type="ChEBI" id="CHEBI:49883"/>
    </ligand>
</feature>
<feature type="binding site" evidence="1">
    <location>
        <position position="310"/>
    </location>
    <ligand>
        <name>[4Fe-4S] cluster</name>
        <dbReference type="ChEBI" id="CHEBI:49883"/>
    </ligand>
</feature>
<comment type="function">
    <text evidence="1">Converts 2C-methyl-D-erythritol 2,4-cyclodiphosphate (ME-2,4cPP) into 1-hydroxy-2-methyl-2-(E)-butenyl 4-diphosphate.</text>
</comment>
<comment type="catalytic activity">
    <reaction evidence="1">
        <text>(2E)-4-hydroxy-3-methylbut-2-enyl diphosphate + oxidized [flavodoxin] + H2O + 2 H(+) = 2-C-methyl-D-erythritol 2,4-cyclic diphosphate + reduced [flavodoxin]</text>
        <dbReference type="Rhea" id="RHEA:43604"/>
        <dbReference type="Rhea" id="RHEA-COMP:10622"/>
        <dbReference type="Rhea" id="RHEA-COMP:10623"/>
        <dbReference type="ChEBI" id="CHEBI:15377"/>
        <dbReference type="ChEBI" id="CHEBI:15378"/>
        <dbReference type="ChEBI" id="CHEBI:57618"/>
        <dbReference type="ChEBI" id="CHEBI:58210"/>
        <dbReference type="ChEBI" id="CHEBI:58483"/>
        <dbReference type="ChEBI" id="CHEBI:128753"/>
        <dbReference type="EC" id="1.17.7.3"/>
    </reaction>
</comment>
<comment type="cofactor">
    <cofactor evidence="1">
        <name>[4Fe-4S] cluster</name>
        <dbReference type="ChEBI" id="CHEBI:49883"/>
    </cofactor>
    <text evidence="1">Binds 1 [4Fe-4S] cluster.</text>
</comment>
<comment type="pathway">
    <text evidence="1">Isoprenoid biosynthesis; isopentenyl diphosphate biosynthesis via DXP pathway; isopentenyl diphosphate from 1-deoxy-D-xylulose 5-phosphate: step 5/6.</text>
</comment>
<comment type="similarity">
    <text evidence="1">Belongs to the IspG family.</text>
</comment>